<organism>
    <name type="scientific">Styela plicata</name>
    <name type="common">Wrinkled sea squirt</name>
    <name type="synonym">Ascidia plicata</name>
    <dbReference type="NCBI Taxonomy" id="7726"/>
    <lineage>
        <taxon>Eukaryota</taxon>
        <taxon>Metazoa</taxon>
        <taxon>Chordata</taxon>
        <taxon>Tunicata</taxon>
        <taxon>Ascidiacea</taxon>
        <taxon>Stolidobranchia</taxon>
        <taxon>Styelidae</taxon>
        <taxon>Styela</taxon>
    </lineage>
</organism>
<feature type="initiator methionine" description="Removed" evidence="1">
    <location>
        <position position="1"/>
    </location>
</feature>
<feature type="chain" id="PRO_0000158364" description="Histone H4">
    <location>
        <begin position="2"/>
        <end position="103"/>
    </location>
</feature>
<feature type="DNA-binding region">
    <location>
        <begin position="17"/>
        <end position="21"/>
    </location>
</feature>
<feature type="region of interest" description="Disordered" evidence="4">
    <location>
        <begin position="1"/>
        <end position="20"/>
    </location>
</feature>
<feature type="compositionally biased region" description="Gly residues" evidence="4">
    <location>
        <begin position="1"/>
        <end position="14"/>
    </location>
</feature>
<feature type="modified residue" description="N-acetylserine" evidence="2">
    <location>
        <position position="2"/>
    </location>
</feature>
<feature type="modified residue" description="N6-(2-hydroxyisobutyryl)lysine; alternate" evidence="2">
    <location>
        <position position="6"/>
    </location>
</feature>
<feature type="modified residue" description="N6-acetyl-N6-methyllysine; alternate" evidence="2">
    <location>
        <position position="6"/>
    </location>
</feature>
<feature type="modified residue" description="N6-butyryllysine; alternate" evidence="2">
    <location>
        <position position="6"/>
    </location>
</feature>
<feature type="modified residue" description="N6-glutaryllysine; alternate" evidence="2">
    <location>
        <position position="6"/>
    </location>
</feature>
<feature type="modified residue" description="N6-(2-hydroxyisobutyryl)lysine; alternate" evidence="2">
    <location>
        <position position="9"/>
    </location>
</feature>
<feature type="modified residue" description="N6-butyryllysine; alternate" evidence="2">
    <location>
        <position position="9"/>
    </location>
</feature>
<feature type="modified residue" description="N6-propionyllysine; alternate" evidence="2">
    <location>
        <position position="9"/>
    </location>
</feature>
<feature type="modified residue" description="N6-(2-hydroxyisobutyryl)lysine; alternate" evidence="2">
    <location>
        <position position="13"/>
    </location>
</feature>
<feature type="modified residue" description="N6-acetyl-N6-methyllysine; alternate" evidence="2">
    <location>
        <position position="13"/>
    </location>
</feature>
<feature type="modified residue" description="N6-butyryllysine; alternate" evidence="2">
    <location>
        <position position="13"/>
    </location>
</feature>
<feature type="modified residue" description="N6-glutaryllysine; alternate" evidence="2">
    <location>
        <position position="13"/>
    </location>
</feature>
<feature type="modified residue" description="N6-(2-hydroxyisobutyryl)lysine; alternate" evidence="2">
    <location>
        <position position="17"/>
    </location>
</feature>
<feature type="modified residue" description="N6-acetyllysine" evidence="2">
    <location>
        <position position="17"/>
    </location>
</feature>
<feature type="modified residue" description="N6-butyryllysine; alternate" evidence="2">
    <location>
        <position position="17"/>
    </location>
</feature>
<feature type="modified residue" description="N6-propionyllysine; alternate" evidence="2">
    <location>
        <position position="17"/>
    </location>
</feature>
<feature type="modified residue" description="N6-methyllysine" evidence="2">
    <location>
        <position position="21"/>
    </location>
</feature>
<feature type="modified residue" description="N6-(2-hydroxyisobutyryl)lysine; alternate" evidence="2">
    <location>
        <position position="32"/>
    </location>
</feature>
<feature type="modified residue" description="N6-butyryllysine; alternate" evidence="2">
    <location>
        <position position="32"/>
    </location>
</feature>
<feature type="modified residue" description="N6-glutaryllysine; alternate" evidence="2">
    <location>
        <position position="32"/>
    </location>
</feature>
<feature type="modified residue" description="N6-propionyllysine; alternate" evidence="2">
    <location>
        <position position="32"/>
    </location>
</feature>
<feature type="modified residue" description="N6-succinyllysine; alternate" evidence="2">
    <location>
        <position position="32"/>
    </location>
</feature>
<feature type="modified residue" description="N6-(2-hydroxyisobutyryl)lysine; alternate" evidence="2">
    <location>
        <position position="45"/>
    </location>
</feature>
<feature type="modified residue" description="N6-butyryllysine; alternate" evidence="2">
    <location>
        <position position="45"/>
    </location>
</feature>
<feature type="modified residue" description="N6-propionyllysine; alternate" evidence="2">
    <location>
        <position position="45"/>
    </location>
</feature>
<feature type="modified residue" description="N6-(2-hydroxyisobutyryl)lysine" evidence="2">
    <location>
        <position position="60"/>
    </location>
</feature>
<feature type="modified residue" description="N6-glutaryllysine; alternate" evidence="2">
    <location>
        <position position="60"/>
    </location>
</feature>
<feature type="modified residue" description="N6-(2-hydroxyisobutyryl)lysine; alternate" evidence="2">
    <location>
        <position position="78"/>
    </location>
</feature>
<feature type="modified residue" description="N6-butyryllysine; alternate" evidence="2">
    <location>
        <position position="78"/>
    </location>
</feature>
<feature type="modified residue" description="N6-glutaryllysine; alternate" evidence="2">
    <location>
        <position position="78"/>
    </location>
</feature>
<feature type="modified residue" description="N6-propionyllysine; alternate" evidence="2">
    <location>
        <position position="78"/>
    </location>
</feature>
<feature type="modified residue" description="N6-succinyllysine" evidence="2">
    <location>
        <position position="78"/>
    </location>
</feature>
<feature type="modified residue" description="N6-(2-hydroxyisobutyryl)lysine; alternate" evidence="2">
    <location>
        <position position="80"/>
    </location>
</feature>
<feature type="modified residue" description="N6-butyryllysine; alternate" evidence="2">
    <location>
        <position position="80"/>
    </location>
</feature>
<feature type="modified residue" description="N6-glutaryllysine; alternate" evidence="2">
    <location>
        <position position="80"/>
    </location>
</feature>
<feature type="modified residue" description="N6-propionyllysine; alternate" evidence="2">
    <location>
        <position position="80"/>
    </location>
</feature>
<feature type="modified residue" description="N6-(2-hydroxyisobutyryl)lysine; alternate" evidence="2">
    <location>
        <position position="92"/>
    </location>
</feature>
<feature type="modified residue" description="N6-butyryllysine; alternate" evidence="2">
    <location>
        <position position="92"/>
    </location>
</feature>
<feature type="modified residue" description="N6-glutaryllysine; alternate" evidence="2">
    <location>
        <position position="92"/>
    </location>
</feature>
<feature type="modified residue" description="N6-propionyllysine; alternate" evidence="2">
    <location>
        <position position="92"/>
    </location>
</feature>
<feature type="modified residue" description="N6-succinyllysine; alternate" evidence="2">
    <location>
        <position position="92"/>
    </location>
</feature>
<name>H4_STYPL</name>
<proteinExistence type="inferred from homology"/>
<accession>Q27765</accession>
<evidence type="ECO:0000250" key="1"/>
<evidence type="ECO:0000250" key="2">
    <source>
        <dbReference type="UniProtKB" id="P62805"/>
    </source>
</evidence>
<evidence type="ECO:0000250" key="3">
    <source>
        <dbReference type="UniProtKB" id="P62806"/>
    </source>
</evidence>
<evidence type="ECO:0000256" key="4">
    <source>
        <dbReference type="SAM" id="MobiDB-lite"/>
    </source>
</evidence>
<evidence type="ECO:0000305" key="5"/>
<dbReference type="EMBL" id="S64499">
    <property type="protein sequence ID" value="AAB27670.2"/>
    <property type="molecule type" value="Genomic_DNA"/>
</dbReference>
<dbReference type="PIR" id="JN0688">
    <property type="entry name" value="JN0688"/>
</dbReference>
<dbReference type="SMR" id="Q27765"/>
<dbReference type="GO" id="GO:0000786">
    <property type="term" value="C:nucleosome"/>
    <property type="evidence" value="ECO:0007669"/>
    <property type="project" value="UniProtKB-KW"/>
</dbReference>
<dbReference type="GO" id="GO:0005634">
    <property type="term" value="C:nucleus"/>
    <property type="evidence" value="ECO:0007669"/>
    <property type="project" value="UniProtKB-SubCell"/>
</dbReference>
<dbReference type="GO" id="GO:0003677">
    <property type="term" value="F:DNA binding"/>
    <property type="evidence" value="ECO:0007669"/>
    <property type="project" value="UniProtKB-KW"/>
</dbReference>
<dbReference type="GO" id="GO:0046982">
    <property type="term" value="F:protein heterodimerization activity"/>
    <property type="evidence" value="ECO:0007669"/>
    <property type="project" value="InterPro"/>
</dbReference>
<dbReference type="GO" id="GO:0030527">
    <property type="term" value="F:structural constituent of chromatin"/>
    <property type="evidence" value="ECO:0007669"/>
    <property type="project" value="InterPro"/>
</dbReference>
<dbReference type="CDD" id="cd22912">
    <property type="entry name" value="HFD_H4"/>
    <property type="match status" value="1"/>
</dbReference>
<dbReference type="FunFam" id="1.10.20.10:FF:000002">
    <property type="entry name" value="Histone H4"/>
    <property type="match status" value="1"/>
</dbReference>
<dbReference type="Gene3D" id="1.10.20.10">
    <property type="entry name" value="Histone, subunit A"/>
    <property type="match status" value="1"/>
</dbReference>
<dbReference type="InterPro" id="IPR035425">
    <property type="entry name" value="CENP-T/H4_C"/>
</dbReference>
<dbReference type="InterPro" id="IPR009072">
    <property type="entry name" value="Histone-fold"/>
</dbReference>
<dbReference type="InterPro" id="IPR001951">
    <property type="entry name" value="Histone_H4"/>
</dbReference>
<dbReference type="InterPro" id="IPR019809">
    <property type="entry name" value="Histone_H4_CS"/>
</dbReference>
<dbReference type="PANTHER" id="PTHR10484">
    <property type="entry name" value="HISTONE H4"/>
    <property type="match status" value="1"/>
</dbReference>
<dbReference type="Pfam" id="PF15511">
    <property type="entry name" value="CENP-T_C"/>
    <property type="match status" value="1"/>
</dbReference>
<dbReference type="PRINTS" id="PR00623">
    <property type="entry name" value="HISTONEH4"/>
</dbReference>
<dbReference type="SMART" id="SM00417">
    <property type="entry name" value="H4"/>
    <property type="match status" value="1"/>
</dbReference>
<dbReference type="SUPFAM" id="SSF47113">
    <property type="entry name" value="Histone-fold"/>
    <property type="match status" value="1"/>
</dbReference>
<dbReference type="PROSITE" id="PS00047">
    <property type="entry name" value="HISTONE_H4"/>
    <property type="match status" value="1"/>
</dbReference>
<keyword id="KW-0007">Acetylation</keyword>
<keyword id="KW-0158">Chromosome</keyword>
<keyword id="KW-0238">DNA-binding</keyword>
<keyword id="KW-0379">Hydroxylation</keyword>
<keyword id="KW-0488">Methylation</keyword>
<keyword id="KW-0544">Nucleosome core</keyword>
<keyword id="KW-0539">Nucleus</keyword>
<reference key="1">
    <citation type="journal article" date="1993" name="Biochem. Biophys. Res. Commun.">
        <title>A characterization of the H3 and H4 histone genes from the ascidian Styela plicata.</title>
        <authorList>
            <person name="Ishaq A.I."/>
            <person name="Rizvi S.B."/>
            <person name="Wells D.E."/>
            <person name="Tomlinson C.R."/>
        </authorList>
    </citation>
    <scope>NUCLEOTIDE SEQUENCE [GENOMIC DNA]</scope>
</reference>
<comment type="function">
    <text>Core component of nucleosome. Nucleosomes wrap and compact DNA into chromatin, limiting DNA accessibility to the cellular machineries which require DNA as a template. Histones thereby play a central role in transcription regulation, DNA repair, DNA replication and chromosomal stability. DNA accessibility is regulated via a complex set of post-translational modifications of histones, also called histone code, and nucleosome remodeling.</text>
</comment>
<comment type="subunit">
    <text>The nucleosome is a histone octamer containing two molecules each of H2A, H2B, H3 and H4 assembled in one H3-H4 heterotetramer and two H2A-H2B heterodimers. The octamer wraps approximately 147 bp of DNA.</text>
</comment>
<comment type="subcellular location">
    <subcellularLocation>
        <location evidence="1">Nucleus</location>
    </subcellularLocation>
    <subcellularLocation>
        <location evidence="1">Chromosome</location>
    </subcellularLocation>
</comment>
<comment type="PTM">
    <text evidence="3">Butyrylation of histones marks active promoters and competes with histone acetylation.</text>
</comment>
<comment type="PTM">
    <text evidence="2">Glutarylation at Lys-92 (H4K91glu) destabilizes nucleosomes by promoting dissociation of the H2A-H2B dimers from nucleosomes.</text>
</comment>
<comment type="similarity">
    <text evidence="5">Belongs to the histone H4 family.</text>
</comment>
<protein>
    <recommendedName>
        <fullName>Histone H4</fullName>
    </recommendedName>
</protein>
<sequence length="103" mass="11349">MSGRGKGGKGLGKGGAKRHRKVLRDNIQGITKPAIRRLARRGGVKRISGLIYEETRGVLKVFLENVIRDAVTYTEHAKRKTVTALDVVYALKRQGRTLYGFGG</sequence>